<reference key="1">
    <citation type="journal article" date="2002" name="Nature">
        <title>The genome sequence of Schizosaccharomyces pombe.</title>
        <authorList>
            <person name="Wood V."/>
            <person name="Gwilliam R."/>
            <person name="Rajandream M.A."/>
            <person name="Lyne M.H."/>
            <person name="Lyne R."/>
            <person name="Stewart A."/>
            <person name="Sgouros J.G."/>
            <person name="Peat N."/>
            <person name="Hayles J."/>
            <person name="Baker S.G."/>
            <person name="Basham D."/>
            <person name="Bowman S."/>
            <person name="Brooks K."/>
            <person name="Brown D."/>
            <person name="Brown S."/>
            <person name="Chillingworth T."/>
            <person name="Churcher C.M."/>
            <person name="Collins M."/>
            <person name="Connor R."/>
            <person name="Cronin A."/>
            <person name="Davis P."/>
            <person name="Feltwell T."/>
            <person name="Fraser A."/>
            <person name="Gentles S."/>
            <person name="Goble A."/>
            <person name="Hamlin N."/>
            <person name="Harris D.E."/>
            <person name="Hidalgo J."/>
            <person name="Hodgson G."/>
            <person name="Holroyd S."/>
            <person name="Hornsby T."/>
            <person name="Howarth S."/>
            <person name="Huckle E.J."/>
            <person name="Hunt S."/>
            <person name="Jagels K."/>
            <person name="James K.D."/>
            <person name="Jones L."/>
            <person name="Jones M."/>
            <person name="Leather S."/>
            <person name="McDonald S."/>
            <person name="McLean J."/>
            <person name="Mooney P."/>
            <person name="Moule S."/>
            <person name="Mungall K.L."/>
            <person name="Murphy L.D."/>
            <person name="Niblett D."/>
            <person name="Odell C."/>
            <person name="Oliver K."/>
            <person name="O'Neil S."/>
            <person name="Pearson D."/>
            <person name="Quail M.A."/>
            <person name="Rabbinowitsch E."/>
            <person name="Rutherford K.M."/>
            <person name="Rutter S."/>
            <person name="Saunders D."/>
            <person name="Seeger K."/>
            <person name="Sharp S."/>
            <person name="Skelton J."/>
            <person name="Simmonds M.N."/>
            <person name="Squares R."/>
            <person name="Squares S."/>
            <person name="Stevens K."/>
            <person name="Taylor K."/>
            <person name="Taylor R.G."/>
            <person name="Tivey A."/>
            <person name="Walsh S.V."/>
            <person name="Warren T."/>
            <person name="Whitehead S."/>
            <person name="Woodward J.R."/>
            <person name="Volckaert G."/>
            <person name="Aert R."/>
            <person name="Robben J."/>
            <person name="Grymonprez B."/>
            <person name="Weltjens I."/>
            <person name="Vanstreels E."/>
            <person name="Rieger M."/>
            <person name="Schaefer M."/>
            <person name="Mueller-Auer S."/>
            <person name="Gabel C."/>
            <person name="Fuchs M."/>
            <person name="Duesterhoeft A."/>
            <person name="Fritzc C."/>
            <person name="Holzer E."/>
            <person name="Moestl D."/>
            <person name="Hilbert H."/>
            <person name="Borzym K."/>
            <person name="Langer I."/>
            <person name="Beck A."/>
            <person name="Lehrach H."/>
            <person name="Reinhardt R."/>
            <person name="Pohl T.M."/>
            <person name="Eger P."/>
            <person name="Zimmermann W."/>
            <person name="Wedler H."/>
            <person name="Wambutt R."/>
            <person name="Purnelle B."/>
            <person name="Goffeau A."/>
            <person name="Cadieu E."/>
            <person name="Dreano S."/>
            <person name="Gloux S."/>
            <person name="Lelaure V."/>
            <person name="Mottier S."/>
            <person name="Galibert F."/>
            <person name="Aves S.J."/>
            <person name="Xiang Z."/>
            <person name="Hunt C."/>
            <person name="Moore K."/>
            <person name="Hurst S.M."/>
            <person name="Lucas M."/>
            <person name="Rochet M."/>
            <person name="Gaillardin C."/>
            <person name="Tallada V.A."/>
            <person name="Garzon A."/>
            <person name="Thode G."/>
            <person name="Daga R.R."/>
            <person name="Cruzado L."/>
            <person name="Jimenez J."/>
            <person name="Sanchez M."/>
            <person name="del Rey F."/>
            <person name="Benito J."/>
            <person name="Dominguez A."/>
            <person name="Revuelta J.L."/>
            <person name="Moreno S."/>
            <person name="Armstrong J."/>
            <person name="Forsburg S.L."/>
            <person name="Cerutti L."/>
            <person name="Lowe T."/>
            <person name="McCombie W.R."/>
            <person name="Paulsen I."/>
            <person name="Potashkin J."/>
            <person name="Shpakovski G.V."/>
            <person name="Ussery D."/>
            <person name="Barrell B.G."/>
            <person name="Nurse P."/>
        </authorList>
    </citation>
    <scope>NUCLEOTIDE SEQUENCE [LARGE SCALE GENOMIC DNA]</scope>
    <source>
        <strain>972 / ATCC 24843</strain>
    </source>
</reference>
<comment type="function">
    <text evidence="1">Mitochondrial GTPase involved in mitochondrial trafficking. Probably involved in control of anterograde transport of mitochondria and their subcellular distribution.</text>
</comment>
<comment type="subcellular location">
    <subcellularLocation>
        <location evidence="1">Mitochondrion outer membrane</location>
        <topology evidence="1">Single-pass type IV membrane protein</topology>
    </subcellularLocation>
</comment>
<comment type="similarity">
    <text evidence="4 5">Belongs to the mitochondrial Rho GTPase family.</text>
</comment>
<protein>
    <recommendedName>
        <fullName>Mitochondrial Rho GTPase 1</fullName>
        <ecNumber>3.6.5.-</ecNumber>
    </recommendedName>
    <alternativeName>
        <fullName>GTPase EF-hand protein of mitochondria 1</fullName>
    </alternativeName>
</protein>
<sequence length="630" mass="71177">MKEVRVVICGDQGVGKSSLISALIQEDNVTSIPKVFPIISIPSNPDSNDDVSLVLVDTQSDSNEREYLAAEIKKANVICLVYSDNYSYERVSIFWLPYFRSLGVNVPIVLCENKSEDLDNYQGLHTIEHEMIPLINEFKEIEACILCSALEKINVNELFYMCRACVIYPITPLWDAKERTMRKATIHALSRIFFLIDKNNDDLLSVDELNSLSEKCFSKNLSIEDASEILSKVKEICPEGVYEGQLTLPGFLAYNRVQVENGKQESTWGILRAFHYTDSLSLDDSYLSPKFEVAPGQIVELSPKGYRFLVDLFYQFDRDNDGALNNEELSALFRHTPGLPEIWVSSQFPNSTVLNEHGYVTYNGWLAQWSMITLFDYKTTLAYLAYLGFDTDGRGHNTDALKVMRKRVSQNRKVSKYDRNVFLCFVVGSKSCGKTALLSSFINNNTNRLTPNTVVNSVEFQSTQRYLVLSEIGETDLDILAEPKSLEACDILCLLYDSSNPNSFSFIANLLNLYPDLQKIPCVFAATKADLDRQQQRYPVQPDEFTKQLGLPSPTHISTAAIWNTSKEFFIQLAESAQYPASSIIRIPEEDSNKTNYQLVAALTAFGALLLSVGGSLTWKIIKHQYYSKK</sequence>
<evidence type="ECO:0000250" key="1">
    <source>
        <dbReference type="UniProtKB" id="P39722"/>
    </source>
</evidence>
<evidence type="ECO:0000255" key="2"/>
<evidence type="ECO:0000255" key="3">
    <source>
        <dbReference type="PROSITE-ProRule" id="PRU00448"/>
    </source>
</evidence>
<evidence type="ECO:0000255" key="4">
    <source>
        <dbReference type="PROSITE-ProRule" id="PRU00757"/>
    </source>
</evidence>
<evidence type="ECO:0000305" key="5"/>
<accession>O59781</accession>
<feature type="chain" id="PRO_0000239339" description="Mitochondrial Rho GTPase 1">
    <location>
        <begin position="1"/>
        <end position="630"/>
    </location>
</feature>
<feature type="topological domain" description="Cytoplasmic" evidence="2">
    <location>
        <begin position="1"/>
        <end position="598"/>
    </location>
</feature>
<feature type="transmembrane region" description="Helical; Anchor for type IV membrane protein" evidence="2">
    <location>
        <begin position="599"/>
        <end position="619"/>
    </location>
</feature>
<feature type="topological domain" description="Mitochondrial intermembrane" evidence="2">
    <location>
        <begin position="620"/>
        <end position="630"/>
    </location>
</feature>
<feature type="domain" description="Miro 1" evidence="4">
    <location>
        <begin position="1"/>
        <end position="168"/>
    </location>
</feature>
<feature type="domain" description="EF-hand 1" evidence="3">
    <location>
        <begin position="184"/>
        <end position="219"/>
    </location>
</feature>
<feature type="domain" description="EF-hand 2" evidence="3">
    <location>
        <begin position="304"/>
        <end position="339"/>
    </location>
</feature>
<feature type="domain" description="Miro 2" evidence="4">
    <location>
        <begin position="419"/>
        <end position="579"/>
    </location>
</feature>
<feature type="binding site" evidence="2">
    <location>
        <begin position="10"/>
        <end position="17"/>
    </location>
    <ligand>
        <name>GTP</name>
        <dbReference type="ChEBI" id="CHEBI:37565"/>
        <label>1</label>
    </ligand>
</feature>
<feature type="binding site" evidence="2">
    <location>
        <begin position="57"/>
        <end position="61"/>
    </location>
    <ligand>
        <name>GTP</name>
        <dbReference type="ChEBI" id="CHEBI:37565"/>
        <label>1</label>
    </ligand>
</feature>
<feature type="binding site" evidence="2">
    <location>
        <begin position="113"/>
        <end position="116"/>
    </location>
    <ligand>
        <name>GTP</name>
        <dbReference type="ChEBI" id="CHEBI:37565"/>
        <label>1</label>
    </ligand>
</feature>
<feature type="binding site" evidence="3">
    <location>
        <position position="197"/>
    </location>
    <ligand>
        <name>Ca(2+)</name>
        <dbReference type="ChEBI" id="CHEBI:29108"/>
        <label>1</label>
    </ligand>
</feature>
<feature type="binding site" evidence="3">
    <location>
        <position position="199"/>
    </location>
    <ligand>
        <name>Ca(2+)</name>
        <dbReference type="ChEBI" id="CHEBI:29108"/>
        <label>1</label>
    </ligand>
</feature>
<feature type="binding site" evidence="3">
    <location>
        <position position="201"/>
    </location>
    <ligand>
        <name>Ca(2+)</name>
        <dbReference type="ChEBI" id="CHEBI:29108"/>
        <label>1</label>
    </ligand>
</feature>
<feature type="binding site" evidence="3">
    <location>
        <position position="208"/>
    </location>
    <ligand>
        <name>Ca(2+)</name>
        <dbReference type="ChEBI" id="CHEBI:29108"/>
        <label>1</label>
    </ligand>
</feature>
<feature type="binding site" evidence="3">
    <location>
        <position position="317"/>
    </location>
    <ligand>
        <name>Ca(2+)</name>
        <dbReference type="ChEBI" id="CHEBI:29108"/>
        <label>2</label>
    </ligand>
</feature>
<feature type="binding site" evidence="3">
    <location>
        <position position="319"/>
    </location>
    <ligand>
        <name>Ca(2+)</name>
        <dbReference type="ChEBI" id="CHEBI:29108"/>
        <label>2</label>
    </ligand>
</feature>
<feature type="binding site" evidence="3">
    <location>
        <position position="321"/>
    </location>
    <ligand>
        <name>Ca(2+)</name>
        <dbReference type="ChEBI" id="CHEBI:29108"/>
        <label>2</label>
    </ligand>
</feature>
<feature type="binding site" evidence="3">
    <location>
        <position position="328"/>
    </location>
    <ligand>
        <name>Ca(2+)</name>
        <dbReference type="ChEBI" id="CHEBI:29108"/>
        <label>2</label>
    </ligand>
</feature>
<feature type="binding site" evidence="2">
    <location>
        <begin position="428"/>
        <end position="435"/>
    </location>
    <ligand>
        <name>GTP</name>
        <dbReference type="ChEBI" id="CHEBI:37565"/>
        <label>2</label>
    </ligand>
</feature>
<feature type="binding site" evidence="2">
    <location>
        <begin position="459"/>
        <end position="463"/>
    </location>
    <ligand>
        <name>GTP</name>
        <dbReference type="ChEBI" id="CHEBI:37565"/>
        <label>2</label>
    </ligand>
</feature>
<feature type="binding site" evidence="2">
    <location>
        <begin position="527"/>
        <end position="530"/>
    </location>
    <ligand>
        <name>GTP</name>
        <dbReference type="ChEBI" id="CHEBI:37565"/>
        <label>2</label>
    </ligand>
</feature>
<dbReference type="EC" id="3.6.5.-"/>
<dbReference type="EMBL" id="CU329672">
    <property type="protein sequence ID" value="CAA18306.1"/>
    <property type="molecule type" value="Genomic_DNA"/>
</dbReference>
<dbReference type="PIR" id="T41307">
    <property type="entry name" value="T41307"/>
</dbReference>
<dbReference type="RefSeq" id="NP_587725.1">
    <property type="nucleotide sequence ID" value="NM_001022720.2"/>
</dbReference>
<dbReference type="SMR" id="O59781"/>
<dbReference type="BioGRID" id="275487">
    <property type="interactions" value="1"/>
</dbReference>
<dbReference type="FunCoup" id="O59781">
    <property type="interactions" value="394"/>
</dbReference>
<dbReference type="STRING" id="284812.O59781"/>
<dbReference type="iPTMnet" id="O59781"/>
<dbReference type="PaxDb" id="4896-SPCC320.04c.1"/>
<dbReference type="EnsemblFungi" id="SPCC320.04c.1">
    <property type="protein sequence ID" value="SPCC320.04c.1:pep"/>
    <property type="gene ID" value="SPCC320.04c"/>
</dbReference>
<dbReference type="GeneID" id="2538910"/>
<dbReference type="KEGG" id="spo:2538910"/>
<dbReference type="PomBase" id="SPCC320.04c">
    <property type="gene designation" value="gem1"/>
</dbReference>
<dbReference type="VEuPathDB" id="FungiDB:SPCC320.04c"/>
<dbReference type="eggNOG" id="KOG1707">
    <property type="taxonomic scope" value="Eukaryota"/>
</dbReference>
<dbReference type="HOGENOM" id="CLU_014255_3_0_1"/>
<dbReference type="InParanoid" id="O59781"/>
<dbReference type="OMA" id="HETTWGI"/>
<dbReference type="PhylomeDB" id="O59781"/>
<dbReference type="Reactome" id="R-SPO-5689880">
    <property type="pathway name" value="Ub-specific processing proteases"/>
</dbReference>
<dbReference type="Reactome" id="R-SPO-9013419">
    <property type="pathway name" value="RHOT2 GTPase cycle"/>
</dbReference>
<dbReference type="Reactome" id="R-SPO-9013425">
    <property type="pathway name" value="RHOT1 GTPase cycle"/>
</dbReference>
<dbReference type="PRO" id="PR:O59781"/>
<dbReference type="Proteomes" id="UP000002485">
    <property type="component" value="Chromosome III"/>
</dbReference>
<dbReference type="GO" id="GO:0032865">
    <property type="term" value="C:ERMES complex"/>
    <property type="evidence" value="ECO:0000266"/>
    <property type="project" value="PomBase"/>
</dbReference>
<dbReference type="GO" id="GO:0005741">
    <property type="term" value="C:mitochondrial outer membrane"/>
    <property type="evidence" value="ECO:0000318"/>
    <property type="project" value="GO_Central"/>
</dbReference>
<dbReference type="GO" id="GO:0005509">
    <property type="term" value="F:calcium ion binding"/>
    <property type="evidence" value="ECO:0000255"/>
    <property type="project" value="PomBase"/>
</dbReference>
<dbReference type="GO" id="GO:0005525">
    <property type="term" value="F:GTP binding"/>
    <property type="evidence" value="ECO:0000318"/>
    <property type="project" value="GO_Central"/>
</dbReference>
<dbReference type="GO" id="GO:0003924">
    <property type="term" value="F:GTPase activity"/>
    <property type="evidence" value="ECO:0000318"/>
    <property type="project" value="GO_Central"/>
</dbReference>
<dbReference type="GO" id="GO:0007005">
    <property type="term" value="P:mitochondrion organization"/>
    <property type="evidence" value="ECO:0000318"/>
    <property type="project" value="GO_Central"/>
</dbReference>
<dbReference type="GO" id="GO:1990456">
    <property type="term" value="P:mitochondrion-endoplasmic reticulum membrane tethering"/>
    <property type="evidence" value="ECO:0000305"/>
    <property type="project" value="PomBase"/>
</dbReference>
<dbReference type="GO" id="GO:0007264">
    <property type="term" value="P:small GTPase-mediated signal transduction"/>
    <property type="evidence" value="ECO:0007669"/>
    <property type="project" value="InterPro"/>
</dbReference>
<dbReference type="CDD" id="cd01893">
    <property type="entry name" value="Miro1"/>
    <property type="match status" value="1"/>
</dbReference>
<dbReference type="CDD" id="cd01892">
    <property type="entry name" value="Miro2"/>
    <property type="match status" value="1"/>
</dbReference>
<dbReference type="FunFam" id="1.10.238.10:FF:000011">
    <property type="entry name" value="Mitochondrial Rho GTPase"/>
    <property type="match status" value="1"/>
</dbReference>
<dbReference type="FunFam" id="3.40.50.300:FF:000553">
    <property type="entry name" value="Mitochondrial Rho GTPase"/>
    <property type="match status" value="1"/>
</dbReference>
<dbReference type="Gene3D" id="1.10.238.10">
    <property type="entry name" value="EF-hand"/>
    <property type="match status" value="2"/>
</dbReference>
<dbReference type="Gene3D" id="3.40.50.300">
    <property type="entry name" value="P-loop containing nucleotide triphosphate hydrolases"/>
    <property type="match status" value="2"/>
</dbReference>
<dbReference type="InterPro" id="IPR011992">
    <property type="entry name" value="EF-hand-dom_pair"/>
</dbReference>
<dbReference type="InterPro" id="IPR018247">
    <property type="entry name" value="EF_Hand_1_Ca_BS"/>
</dbReference>
<dbReference type="InterPro" id="IPR013566">
    <property type="entry name" value="EF_hand_assoc_1"/>
</dbReference>
<dbReference type="InterPro" id="IPR013567">
    <property type="entry name" value="EF_hand_assoc_2"/>
</dbReference>
<dbReference type="InterPro" id="IPR002048">
    <property type="entry name" value="EF_hand_dom"/>
</dbReference>
<dbReference type="InterPro" id="IPR021181">
    <property type="entry name" value="Miro"/>
</dbReference>
<dbReference type="InterPro" id="IPR020860">
    <property type="entry name" value="MIRO_dom"/>
</dbReference>
<dbReference type="InterPro" id="IPR027417">
    <property type="entry name" value="P-loop_NTPase"/>
</dbReference>
<dbReference type="InterPro" id="IPR001806">
    <property type="entry name" value="Small_GTPase"/>
</dbReference>
<dbReference type="InterPro" id="IPR003578">
    <property type="entry name" value="Small_GTPase_Rho"/>
</dbReference>
<dbReference type="PANTHER" id="PTHR24072">
    <property type="entry name" value="RHO FAMILY GTPASE"/>
    <property type="match status" value="1"/>
</dbReference>
<dbReference type="Pfam" id="PF08355">
    <property type="entry name" value="EF_assoc_1"/>
    <property type="match status" value="1"/>
</dbReference>
<dbReference type="Pfam" id="PF08356">
    <property type="entry name" value="EF_assoc_2"/>
    <property type="match status" value="1"/>
</dbReference>
<dbReference type="Pfam" id="PF00071">
    <property type="entry name" value="Ras"/>
    <property type="match status" value="2"/>
</dbReference>
<dbReference type="PIRSF" id="PIRSF037488">
    <property type="entry name" value="Mt_Rho_GTPase"/>
    <property type="match status" value="1"/>
</dbReference>
<dbReference type="PRINTS" id="PR00449">
    <property type="entry name" value="RASTRNSFRMNG"/>
</dbReference>
<dbReference type="SMART" id="SM00054">
    <property type="entry name" value="EFh"/>
    <property type="match status" value="2"/>
</dbReference>
<dbReference type="SMART" id="SM00175">
    <property type="entry name" value="RAB"/>
    <property type="match status" value="1"/>
</dbReference>
<dbReference type="SMART" id="SM00173">
    <property type="entry name" value="RAS"/>
    <property type="match status" value="1"/>
</dbReference>
<dbReference type="SMART" id="SM00174">
    <property type="entry name" value="RHO"/>
    <property type="match status" value="1"/>
</dbReference>
<dbReference type="SUPFAM" id="SSF47473">
    <property type="entry name" value="EF-hand"/>
    <property type="match status" value="1"/>
</dbReference>
<dbReference type="SUPFAM" id="SSF52540">
    <property type="entry name" value="P-loop containing nucleoside triphosphate hydrolases"/>
    <property type="match status" value="2"/>
</dbReference>
<dbReference type="PROSITE" id="PS00018">
    <property type="entry name" value="EF_HAND_1"/>
    <property type="match status" value="2"/>
</dbReference>
<dbReference type="PROSITE" id="PS50222">
    <property type="entry name" value="EF_HAND_2"/>
    <property type="match status" value="2"/>
</dbReference>
<dbReference type="PROSITE" id="PS51423">
    <property type="entry name" value="MIRO"/>
    <property type="match status" value="2"/>
</dbReference>
<gene>
    <name type="primary">gem1</name>
    <name type="ORF">SPCC320.04c</name>
</gene>
<name>GEM1_SCHPO</name>
<keyword id="KW-0106">Calcium</keyword>
<keyword id="KW-0342">GTP-binding</keyword>
<keyword id="KW-0378">Hydrolase</keyword>
<keyword id="KW-0472">Membrane</keyword>
<keyword id="KW-0479">Metal-binding</keyword>
<keyword id="KW-0496">Mitochondrion</keyword>
<keyword id="KW-1000">Mitochondrion outer membrane</keyword>
<keyword id="KW-0547">Nucleotide-binding</keyword>
<keyword id="KW-1185">Reference proteome</keyword>
<keyword id="KW-0677">Repeat</keyword>
<keyword id="KW-0812">Transmembrane</keyword>
<keyword id="KW-1133">Transmembrane helix</keyword>
<organism>
    <name type="scientific">Schizosaccharomyces pombe (strain 972 / ATCC 24843)</name>
    <name type="common">Fission yeast</name>
    <dbReference type="NCBI Taxonomy" id="284812"/>
    <lineage>
        <taxon>Eukaryota</taxon>
        <taxon>Fungi</taxon>
        <taxon>Dikarya</taxon>
        <taxon>Ascomycota</taxon>
        <taxon>Taphrinomycotina</taxon>
        <taxon>Schizosaccharomycetes</taxon>
        <taxon>Schizosaccharomycetales</taxon>
        <taxon>Schizosaccharomycetaceae</taxon>
        <taxon>Schizosaccharomyces</taxon>
    </lineage>
</organism>
<proteinExistence type="inferred from homology"/>